<evidence type="ECO:0000255" key="1">
    <source>
        <dbReference type="HAMAP-Rule" id="MF_00688"/>
    </source>
</evidence>
<name>LFTR_SINMW</name>
<gene>
    <name evidence="1" type="primary">aat</name>
    <name type="ordered locus">Smed_0951</name>
</gene>
<proteinExistence type="inferred from homology"/>
<accession>A6U825</accession>
<dbReference type="EC" id="2.3.2.6" evidence="1"/>
<dbReference type="EMBL" id="CP000738">
    <property type="protein sequence ID" value="ABR59805.1"/>
    <property type="molecule type" value="Genomic_DNA"/>
</dbReference>
<dbReference type="RefSeq" id="WP_011975141.1">
    <property type="nucleotide sequence ID" value="NC_009636.1"/>
</dbReference>
<dbReference type="RefSeq" id="YP_001326640.1">
    <property type="nucleotide sequence ID" value="NC_009636.1"/>
</dbReference>
<dbReference type="SMR" id="A6U825"/>
<dbReference type="STRING" id="366394.Smed_0951"/>
<dbReference type="GeneID" id="61612214"/>
<dbReference type="KEGG" id="smd:Smed_0951"/>
<dbReference type="PATRIC" id="fig|366394.8.peg.4066"/>
<dbReference type="eggNOG" id="COG2360">
    <property type="taxonomic scope" value="Bacteria"/>
</dbReference>
<dbReference type="HOGENOM" id="CLU_075045_1_1_5"/>
<dbReference type="OrthoDB" id="9790282at2"/>
<dbReference type="Proteomes" id="UP000001108">
    <property type="component" value="Chromosome"/>
</dbReference>
<dbReference type="GO" id="GO:0005737">
    <property type="term" value="C:cytoplasm"/>
    <property type="evidence" value="ECO:0007669"/>
    <property type="project" value="UniProtKB-SubCell"/>
</dbReference>
<dbReference type="GO" id="GO:0008914">
    <property type="term" value="F:leucyl-tRNA--protein transferase activity"/>
    <property type="evidence" value="ECO:0007669"/>
    <property type="project" value="UniProtKB-UniRule"/>
</dbReference>
<dbReference type="GO" id="GO:0030163">
    <property type="term" value="P:protein catabolic process"/>
    <property type="evidence" value="ECO:0007669"/>
    <property type="project" value="UniProtKB-UniRule"/>
</dbReference>
<dbReference type="FunFam" id="3.40.630.70:FF:000001">
    <property type="entry name" value="Leucyl/phenylalanyl-tRNA--protein transferase"/>
    <property type="match status" value="1"/>
</dbReference>
<dbReference type="Gene3D" id="3.40.630.70">
    <property type="entry name" value="Leucyl/phenylalanyl-tRNA-protein transferase, C-terminal domain"/>
    <property type="match status" value="1"/>
</dbReference>
<dbReference type="HAMAP" id="MF_00688">
    <property type="entry name" value="Leu_Phe_trans"/>
    <property type="match status" value="1"/>
</dbReference>
<dbReference type="InterPro" id="IPR016181">
    <property type="entry name" value="Acyl_CoA_acyltransferase"/>
</dbReference>
<dbReference type="InterPro" id="IPR004616">
    <property type="entry name" value="Leu/Phe-tRNA_Trfase"/>
</dbReference>
<dbReference type="InterPro" id="IPR042203">
    <property type="entry name" value="Leu/Phe-tRNA_Trfase_C"/>
</dbReference>
<dbReference type="NCBIfam" id="TIGR00667">
    <property type="entry name" value="aat"/>
    <property type="match status" value="1"/>
</dbReference>
<dbReference type="PANTHER" id="PTHR30098">
    <property type="entry name" value="LEUCYL/PHENYLALANYL-TRNA--PROTEIN TRANSFERASE"/>
    <property type="match status" value="1"/>
</dbReference>
<dbReference type="PANTHER" id="PTHR30098:SF2">
    <property type="entry name" value="LEUCYL_PHENYLALANYL-TRNA--PROTEIN TRANSFERASE"/>
    <property type="match status" value="1"/>
</dbReference>
<dbReference type="Pfam" id="PF03588">
    <property type="entry name" value="Leu_Phe_trans"/>
    <property type="match status" value="1"/>
</dbReference>
<dbReference type="SUPFAM" id="SSF55729">
    <property type="entry name" value="Acyl-CoA N-acyltransferases (Nat)"/>
    <property type="match status" value="1"/>
</dbReference>
<protein>
    <recommendedName>
        <fullName evidence="1">Leucyl/phenylalanyl-tRNA--protein transferase</fullName>
        <ecNumber evidence="1">2.3.2.6</ecNumber>
    </recommendedName>
    <alternativeName>
        <fullName evidence="1">L/F-transferase</fullName>
    </alternativeName>
    <alternativeName>
        <fullName evidence="1">Leucyltransferase</fullName>
    </alternativeName>
    <alternativeName>
        <fullName evidence="1">Phenyalanyltransferase</fullName>
    </alternativeName>
</protein>
<sequence length="204" mass="22969">MKETRSKQPDITPDMLLRAYSIGLFPMADSADDPELFWVEPEIRGIIPLDRFHVSRSLAKVIRRRPFDIRFDTAFSEVIEGCAQRAPDRPTTWINDTIRALYAALHKMGHAHSVEAWEGDTLVGGLYGVSLGAAFFGESMFSRRTDASKICLVHLVQRLRSKGFQLLDTQFTTEHLKSFGAVDVPKVEYEVLLAKAIASPNLDF</sequence>
<feature type="chain" id="PRO_1000045117" description="Leucyl/phenylalanyl-tRNA--protein transferase">
    <location>
        <begin position="1"/>
        <end position="204"/>
    </location>
</feature>
<keyword id="KW-0012">Acyltransferase</keyword>
<keyword id="KW-0963">Cytoplasm</keyword>
<keyword id="KW-0808">Transferase</keyword>
<comment type="function">
    <text evidence="1">Functions in the N-end rule pathway of protein degradation where it conjugates Leu, Phe and, less efficiently, Met from aminoacyl-tRNAs to the N-termini of proteins containing an N-terminal arginine or lysine.</text>
</comment>
<comment type="catalytic activity">
    <reaction evidence="1">
        <text>N-terminal L-lysyl-[protein] + L-leucyl-tRNA(Leu) = N-terminal L-leucyl-L-lysyl-[protein] + tRNA(Leu) + H(+)</text>
        <dbReference type="Rhea" id="RHEA:12340"/>
        <dbReference type="Rhea" id="RHEA-COMP:9613"/>
        <dbReference type="Rhea" id="RHEA-COMP:9622"/>
        <dbReference type="Rhea" id="RHEA-COMP:12670"/>
        <dbReference type="Rhea" id="RHEA-COMP:12671"/>
        <dbReference type="ChEBI" id="CHEBI:15378"/>
        <dbReference type="ChEBI" id="CHEBI:65249"/>
        <dbReference type="ChEBI" id="CHEBI:78442"/>
        <dbReference type="ChEBI" id="CHEBI:78494"/>
        <dbReference type="ChEBI" id="CHEBI:133043"/>
        <dbReference type="EC" id="2.3.2.6"/>
    </reaction>
</comment>
<comment type="catalytic activity">
    <reaction evidence="1">
        <text>N-terminal L-arginyl-[protein] + L-leucyl-tRNA(Leu) = N-terminal L-leucyl-L-arginyl-[protein] + tRNA(Leu) + H(+)</text>
        <dbReference type="Rhea" id="RHEA:50416"/>
        <dbReference type="Rhea" id="RHEA-COMP:9613"/>
        <dbReference type="Rhea" id="RHEA-COMP:9622"/>
        <dbReference type="Rhea" id="RHEA-COMP:12672"/>
        <dbReference type="Rhea" id="RHEA-COMP:12673"/>
        <dbReference type="ChEBI" id="CHEBI:15378"/>
        <dbReference type="ChEBI" id="CHEBI:64719"/>
        <dbReference type="ChEBI" id="CHEBI:78442"/>
        <dbReference type="ChEBI" id="CHEBI:78494"/>
        <dbReference type="ChEBI" id="CHEBI:133044"/>
        <dbReference type="EC" id="2.3.2.6"/>
    </reaction>
</comment>
<comment type="catalytic activity">
    <reaction evidence="1">
        <text>L-phenylalanyl-tRNA(Phe) + an N-terminal L-alpha-aminoacyl-[protein] = an N-terminal L-phenylalanyl-L-alpha-aminoacyl-[protein] + tRNA(Phe)</text>
        <dbReference type="Rhea" id="RHEA:43632"/>
        <dbReference type="Rhea" id="RHEA-COMP:9668"/>
        <dbReference type="Rhea" id="RHEA-COMP:9699"/>
        <dbReference type="Rhea" id="RHEA-COMP:10636"/>
        <dbReference type="Rhea" id="RHEA-COMP:10637"/>
        <dbReference type="ChEBI" id="CHEBI:78442"/>
        <dbReference type="ChEBI" id="CHEBI:78531"/>
        <dbReference type="ChEBI" id="CHEBI:78597"/>
        <dbReference type="ChEBI" id="CHEBI:83561"/>
        <dbReference type="EC" id="2.3.2.6"/>
    </reaction>
</comment>
<comment type="subcellular location">
    <subcellularLocation>
        <location evidence="1">Cytoplasm</location>
    </subcellularLocation>
</comment>
<comment type="similarity">
    <text evidence="1">Belongs to the L/F-transferase family.</text>
</comment>
<reference key="1">
    <citation type="submission" date="2007-06" db="EMBL/GenBank/DDBJ databases">
        <title>Complete sequence of Sinorhizobium medicae WSM419 chromosome.</title>
        <authorList>
            <consortium name="US DOE Joint Genome Institute"/>
            <person name="Copeland A."/>
            <person name="Lucas S."/>
            <person name="Lapidus A."/>
            <person name="Barry K."/>
            <person name="Glavina del Rio T."/>
            <person name="Dalin E."/>
            <person name="Tice H."/>
            <person name="Pitluck S."/>
            <person name="Chain P."/>
            <person name="Malfatti S."/>
            <person name="Shin M."/>
            <person name="Vergez L."/>
            <person name="Schmutz J."/>
            <person name="Larimer F."/>
            <person name="Land M."/>
            <person name="Hauser L."/>
            <person name="Kyrpides N."/>
            <person name="Mikhailova N."/>
            <person name="Reeve W.G."/>
            <person name="Richardson P."/>
        </authorList>
    </citation>
    <scope>NUCLEOTIDE SEQUENCE [LARGE SCALE GENOMIC DNA]</scope>
    <source>
        <strain>WSM419</strain>
    </source>
</reference>
<organism>
    <name type="scientific">Sinorhizobium medicae (strain WSM419)</name>
    <name type="common">Ensifer medicae</name>
    <dbReference type="NCBI Taxonomy" id="366394"/>
    <lineage>
        <taxon>Bacteria</taxon>
        <taxon>Pseudomonadati</taxon>
        <taxon>Pseudomonadota</taxon>
        <taxon>Alphaproteobacteria</taxon>
        <taxon>Hyphomicrobiales</taxon>
        <taxon>Rhizobiaceae</taxon>
        <taxon>Sinorhizobium/Ensifer group</taxon>
        <taxon>Sinorhizobium</taxon>
    </lineage>
</organism>